<keyword id="KW-0030">Aminoacyl-tRNA synthetase</keyword>
<keyword id="KW-0067">ATP-binding</keyword>
<keyword id="KW-0963">Cytoplasm</keyword>
<keyword id="KW-0436">Ligase</keyword>
<keyword id="KW-0479">Metal-binding</keyword>
<keyword id="KW-0547">Nucleotide-binding</keyword>
<keyword id="KW-0648">Protein biosynthesis</keyword>
<keyword id="KW-1185">Reference proteome</keyword>
<keyword id="KW-0862">Zinc</keyword>
<dbReference type="EC" id="6.1.1.5" evidence="1"/>
<dbReference type="EMBL" id="CP000896">
    <property type="protein sequence ID" value="ABX81318.1"/>
    <property type="molecule type" value="Genomic_DNA"/>
</dbReference>
<dbReference type="RefSeq" id="WP_012242649.1">
    <property type="nucleotide sequence ID" value="NC_010163.1"/>
</dbReference>
<dbReference type="SMR" id="A9NG38"/>
<dbReference type="STRING" id="441768.ACL_0702"/>
<dbReference type="GeneID" id="41338866"/>
<dbReference type="KEGG" id="acl:ACL_0702"/>
<dbReference type="eggNOG" id="COG0060">
    <property type="taxonomic scope" value="Bacteria"/>
</dbReference>
<dbReference type="HOGENOM" id="CLU_001493_7_1_14"/>
<dbReference type="OrthoDB" id="9810365at2"/>
<dbReference type="Proteomes" id="UP000008558">
    <property type="component" value="Chromosome"/>
</dbReference>
<dbReference type="GO" id="GO:0005829">
    <property type="term" value="C:cytosol"/>
    <property type="evidence" value="ECO:0007669"/>
    <property type="project" value="TreeGrafter"/>
</dbReference>
<dbReference type="GO" id="GO:0002161">
    <property type="term" value="F:aminoacyl-tRNA deacylase activity"/>
    <property type="evidence" value="ECO:0007669"/>
    <property type="project" value="InterPro"/>
</dbReference>
<dbReference type="GO" id="GO:0005524">
    <property type="term" value="F:ATP binding"/>
    <property type="evidence" value="ECO:0007669"/>
    <property type="project" value="UniProtKB-UniRule"/>
</dbReference>
<dbReference type="GO" id="GO:0004822">
    <property type="term" value="F:isoleucine-tRNA ligase activity"/>
    <property type="evidence" value="ECO:0007669"/>
    <property type="project" value="UniProtKB-UniRule"/>
</dbReference>
<dbReference type="GO" id="GO:0000049">
    <property type="term" value="F:tRNA binding"/>
    <property type="evidence" value="ECO:0007669"/>
    <property type="project" value="InterPro"/>
</dbReference>
<dbReference type="GO" id="GO:0008270">
    <property type="term" value="F:zinc ion binding"/>
    <property type="evidence" value="ECO:0007669"/>
    <property type="project" value="UniProtKB-UniRule"/>
</dbReference>
<dbReference type="GO" id="GO:0006428">
    <property type="term" value="P:isoleucyl-tRNA aminoacylation"/>
    <property type="evidence" value="ECO:0007669"/>
    <property type="project" value="UniProtKB-UniRule"/>
</dbReference>
<dbReference type="CDD" id="cd07960">
    <property type="entry name" value="Anticodon_Ia_Ile_BEm"/>
    <property type="match status" value="1"/>
</dbReference>
<dbReference type="CDD" id="cd00818">
    <property type="entry name" value="IleRS_core"/>
    <property type="match status" value="1"/>
</dbReference>
<dbReference type="FunFam" id="3.40.50.620:FF:000152">
    <property type="entry name" value="Isoleucine--tRNA ligase"/>
    <property type="match status" value="1"/>
</dbReference>
<dbReference type="Gene3D" id="1.10.730.20">
    <property type="match status" value="1"/>
</dbReference>
<dbReference type="Gene3D" id="3.40.50.620">
    <property type="entry name" value="HUPs"/>
    <property type="match status" value="2"/>
</dbReference>
<dbReference type="Gene3D" id="1.10.10.830">
    <property type="entry name" value="Ile-tRNA synthetase CP2 domain-like"/>
    <property type="match status" value="1"/>
</dbReference>
<dbReference type="HAMAP" id="MF_02002">
    <property type="entry name" value="Ile_tRNA_synth_type1"/>
    <property type="match status" value="1"/>
</dbReference>
<dbReference type="InterPro" id="IPR001412">
    <property type="entry name" value="aa-tRNA-synth_I_CS"/>
</dbReference>
<dbReference type="InterPro" id="IPR002300">
    <property type="entry name" value="aa-tRNA-synth_Ia"/>
</dbReference>
<dbReference type="InterPro" id="IPR033708">
    <property type="entry name" value="Anticodon_Ile_BEm"/>
</dbReference>
<dbReference type="InterPro" id="IPR002301">
    <property type="entry name" value="Ile-tRNA-ligase"/>
</dbReference>
<dbReference type="InterPro" id="IPR023585">
    <property type="entry name" value="Ile-tRNA-ligase_type1"/>
</dbReference>
<dbReference type="InterPro" id="IPR050081">
    <property type="entry name" value="Ile-tRNA_ligase"/>
</dbReference>
<dbReference type="InterPro" id="IPR013155">
    <property type="entry name" value="M/V/L/I-tRNA-synth_anticd-bd"/>
</dbReference>
<dbReference type="InterPro" id="IPR014729">
    <property type="entry name" value="Rossmann-like_a/b/a_fold"/>
</dbReference>
<dbReference type="InterPro" id="IPR009080">
    <property type="entry name" value="tRNAsynth_Ia_anticodon-bd"/>
</dbReference>
<dbReference type="InterPro" id="IPR009008">
    <property type="entry name" value="Val/Leu/Ile-tRNA-synth_edit"/>
</dbReference>
<dbReference type="NCBIfam" id="TIGR00392">
    <property type="entry name" value="ileS"/>
    <property type="match status" value="1"/>
</dbReference>
<dbReference type="PANTHER" id="PTHR42765:SF1">
    <property type="entry name" value="ISOLEUCINE--TRNA LIGASE, MITOCHONDRIAL"/>
    <property type="match status" value="1"/>
</dbReference>
<dbReference type="PANTHER" id="PTHR42765">
    <property type="entry name" value="SOLEUCYL-TRNA SYNTHETASE"/>
    <property type="match status" value="1"/>
</dbReference>
<dbReference type="Pfam" id="PF08264">
    <property type="entry name" value="Anticodon_1"/>
    <property type="match status" value="1"/>
</dbReference>
<dbReference type="Pfam" id="PF00133">
    <property type="entry name" value="tRNA-synt_1"/>
    <property type="match status" value="1"/>
</dbReference>
<dbReference type="PRINTS" id="PR00984">
    <property type="entry name" value="TRNASYNTHILE"/>
</dbReference>
<dbReference type="SUPFAM" id="SSF47323">
    <property type="entry name" value="Anticodon-binding domain of a subclass of class I aminoacyl-tRNA synthetases"/>
    <property type="match status" value="1"/>
</dbReference>
<dbReference type="SUPFAM" id="SSF52374">
    <property type="entry name" value="Nucleotidylyl transferase"/>
    <property type="match status" value="1"/>
</dbReference>
<dbReference type="SUPFAM" id="SSF50677">
    <property type="entry name" value="ValRS/IleRS/LeuRS editing domain"/>
    <property type="match status" value="1"/>
</dbReference>
<dbReference type="PROSITE" id="PS00178">
    <property type="entry name" value="AA_TRNA_LIGASE_I"/>
    <property type="match status" value="1"/>
</dbReference>
<name>SYI_ACHLI</name>
<sequence>MNYKDTLLMPKTDFEMRGNLGKREPEIQKHWESIDLYNKVLEKNKDNTPFVLHDGPPYANNNIHIGHAFQKTLKDFVLRYQTMSGRYTPYIPGWDTHGLPIENEVTKSGVDRKQLTRAEFRKICREYAIKQVEVQRAQFKRLGILGDWDNPYLTLDKSYIADQVRVFSQMVDKGIIYKGLKPIYWSPSSESAFAEAEIEYMDKQSKSIYVGFDMMGDKFPNTKLLIWTTTPWTLPANLAVSVHPNFDYVWFNNDGKNYIALKELLPKLVEKLGFSHAKVLKEFKGSTLEFMNYKHPLYDRVSPIILGEHVTAEDGTGLVHTAPGHGEDDYFVGKKYNLDLLSPVDEKGHMTEEAGPYAGMFYEKANAQIVEDLRENGHLLYDETITHSYPHDWRTKKPVIFRSTPQWFASIDMLKGDLLEAIKGVKWHTSWGEVRLTNMIKDRNDWVISRQRVWGVPIPIFYDNENNPLLDRKLIDHVASLFEVHGSDIWYEWDVEKLLPSDYEGPRDLTKELDIMDVWFDSGTSYNILKRRGLPFPADMYLEGSDQYRGWFNSSLTTAIAVDGVSPYKEIVSHGFVLDGKGRKMSKSLGNVIDPLTVMNDQGADVLRLWVASVDYEADVRISNDLMKQVSESYRKFRNTFRFMLGVLDGFNPEVNYIGWSMRGQLNRVMTDKYYVLATKVNESYAKYNFVEVTRLIIPFVVNDLSAFYLDYTKDSLYCDAEDDFERRAIQSTIYDILLGLLRLLTPIMPHTTSEAYDSLKYKEYDNIYLEKMPIGGKLKEPKLQENYDIFDELRNHVLKHLELAREAKVIGKSLDAHLDLSVDQTTYDALEYLDLLNKLDKILIVSSVHITKADQLDIKVSKADGHVCARCWNIVKEVNQNDVCVRCESVLEGLK</sequence>
<evidence type="ECO:0000255" key="1">
    <source>
        <dbReference type="HAMAP-Rule" id="MF_02002"/>
    </source>
</evidence>
<reference key="1">
    <citation type="journal article" date="2011" name="J. Bacteriol.">
        <title>Complete genome and proteome of Acholeplasma laidlawii.</title>
        <authorList>
            <person name="Lazarev V.N."/>
            <person name="Levitskii S.A."/>
            <person name="Basovskii Y.I."/>
            <person name="Chukin M.M."/>
            <person name="Akopian T.A."/>
            <person name="Vereshchagin V.V."/>
            <person name="Kostrjukova E.S."/>
            <person name="Kovaleva G.Y."/>
            <person name="Kazanov M.D."/>
            <person name="Malko D.B."/>
            <person name="Vitreschak A.G."/>
            <person name="Sernova N.V."/>
            <person name="Gelfand M.S."/>
            <person name="Demina I.A."/>
            <person name="Serebryakova M.V."/>
            <person name="Galyamina M.A."/>
            <person name="Vtyurin N.N."/>
            <person name="Rogov S.I."/>
            <person name="Alexeev D.G."/>
            <person name="Ladygina V.G."/>
            <person name="Govorun V.M."/>
        </authorList>
    </citation>
    <scope>NUCLEOTIDE SEQUENCE [LARGE SCALE GENOMIC DNA]</scope>
    <source>
        <strain>PG-8A</strain>
    </source>
</reference>
<organism>
    <name type="scientific">Acholeplasma laidlawii (strain PG-8A)</name>
    <dbReference type="NCBI Taxonomy" id="441768"/>
    <lineage>
        <taxon>Bacteria</taxon>
        <taxon>Bacillati</taxon>
        <taxon>Mycoplasmatota</taxon>
        <taxon>Mollicutes</taxon>
        <taxon>Acholeplasmatales</taxon>
        <taxon>Acholeplasmataceae</taxon>
        <taxon>Acholeplasma</taxon>
    </lineage>
</organism>
<proteinExistence type="inferred from homology"/>
<feature type="chain" id="PRO_1000216231" description="Isoleucine--tRNA ligase">
    <location>
        <begin position="1"/>
        <end position="896"/>
    </location>
</feature>
<feature type="short sequence motif" description="'HIGH' region">
    <location>
        <begin position="57"/>
        <end position="67"/>
    </location>
</feature>
<feature type="short sequence motif" description="'KMSKS' region">
    <location>
        <begin position="584"/>
        <end position="588"/>
    </location>
</feature>
<feature type="binding site" evidence="1">
    <location>
        <position position="543"/>
    </location>
    <ligand>
        <name>L-isoleucyl-5'-AMP</name>
        <dbReference type="ChEBI" id="CHEBI:178002"/>
    </ligand>
</feature>
<feature type="binding site" evidence="1">
    <location>
        <position position="587"/>
    </location>
    <ligand>
        <name>ATP</name>
        <dbReference type="ChEBI" id="CHEBI:30616"/>
    </ligand>
</feature>
<feature type="binding site" evidence="1">
    <location>
        <position position="869"/>
    </location>
    <ligand>
        <name>Zn(2+)</name>
        <dbReference type="ChEBI" id="CHEBI:29105"/>
    </ligand>
</feature>
<feature type="binding site" evidence="1">
    <location>
        <position position="872"/>
    </location>
    <ligand>
        <name>Zn(2+)</name>
        <dbReference type="ChEBI" id="CHEBI:29105"/>
    </ligand>
</feature>
<feature type="binding site" evidence="1">
    <location>
        <position position="885"/>
    </location>
    <ligand>
        <name>Zn(2+)</name>
        <dbReference type="ChEBI" id="CHEBI:29105"/>
    </ligand>
</feature>
<feature type="binding site" evidence="1">
    <location>
        <position position="888"/>
    </location>
    <ligand>
        <name>Zn(2+)</name>
        <dbReference type="ChEBI" id="CHEBI:29105"/>
    </ligand>
</feature>
<comment type="function">
    <text evidence="1">Catalyzes the attachment of isoleucine to tRNA(Ile). As IleRS can inadvertently accommodate and process structurally similar amino acids such as valine, to avoid such errors it has two additional distinct tRNA(Ile)-dependent editing activities. One activity is designated as 'pretransfer' editing and involves the hydrolysis of activated Val-AMP. The other activity is designated 'posttransfer' editing and involves deacylation of mischarged Val-tRNA(Ile).</text>
</comment>
<comment type="catalytic activity">
    <reaction evidence="1">
        <text>tRNA(Ile) + L-isoleucine + ATP = L-isoleucyl-tRNA(Ile) + AMP + diphosphate</text>
        <dbReference type="Rhea" id="RHEA:11060"/>
        <dbReference type="Rhea" id="RHEA-COMP:9666"/>
        <dbReference type="Rhea" id="RHEA-COMP:9695"/>
        <dbReference type="ChEBI" id="CHEBI:30616"/>
        <dbReference type="ChEBI" id="CHEBI:33019"/>
        <dbReference type="ChEBI" id="CHEBI:58045"/>
        <dbReference type="ChEBI" id="CHEBI:78442"/>
        <dbReference type="ChEBI" id="CHEBI:78528"/>
        <dbReference type="ChEBI" id="CHEBI:456215"/>
        <dbReference type="EC" id="6.1.1.5"/>
    </reaction>
</comment>
<comment type="cofactor">
    <cofactor evidence="1">
        <name>Zn(2+)</name>
        <dbReference type="ChEBI" id="CHEBI:29105"/>
    </cofactor>
    <text evidence="1">Binds 1 zinc ion per subunit.</text>
</comment>
<comment type="subunit">
    <text evidence="1">Monomer.</text>
</comment>
<comment type="subcellular location">
    <subcellularLocation>
        <location evidence="1">Cytoplasm</location>
    </subcellularLocation>
</comment>
<comment type="domain">
    <text evidence="1">IleRS has two distinct active sites: one for aminoacylation and one for editing. The misactivated valine is translocated from the active site to the editing site, which sterically excludes the correctly activated isoleucine. The single editing site contains two valyl binding pockets, one specific for each substrate (Val-AMP or Val-tRNA(Ile)).</text>
</comment>
<comment type="similarity">
    <text evidence="1">Belongs to the class-I aminoacyl-tRNA synthetase family. IleS type 1 subfamily.</text>
</comment>
<protein>
    <recommendedName>
        <fullName evidence="1">Isoleucine--tRNA ligase</fullName>
        <ecNumber evidence="1">6.1.1.5</ecNumber>
    </recommendedName>
    <alternativeName>
        <fullName evidence="1">Isoleucyl-tRNA synthetase</fullName>
        <shortName evidence="1">IleRS</shortName>
    </alternativeName>
</protein>
<gene>
    <name evidence="1" type="primary">ileS</name>
    <name type="ordered locus">ACL_0702</name>
</gene>
<accession>A9NG38</accession>